<protein>
    <recommendedName>
        <fullName evidence="1">Acetyl-coenzyme A carboxylase carboxyl transferase subunit beta</fullName>
        <shortName evidence="1">ACCase subunit beta</shortName>
        <shortName evidence="1">Acetyl-CoA carboxylase carboxyltransferase subunit beta</shortName>
        <ecNumber evidence="1">2.1.3.15</ecNumber>
    </recommendedName>
</protein>
<feature type="chain" id="PRO_0000359062" description="Acetyl-coenzyme A carboxylase carboxyl transferase subunit beta">
    <location>
        <begin position="1"/>
        <end position="302"/>
    </location>
</feature>
<feature type="domain" description="CoA carboxyltransferase N-terminal" evidence="2">
    <location>
        <begin position="25"/>
        <end position="294"/>
    </location>
</feature>
<feature type="zinc finger region" description="C4-type" evidence="1">
    <location>
        <begin position="29"/>
        <end position="51"/>
    </location>
</feature>
<feature type="region of interest" description="Disordered" evidence="3">
    <location>
        <begin position="281"/>
        <end position="302"/>
    </location>
</feature>
<feature type="binding site" evidence="1">
    <location>
        <position position="29"/>
    </location>
    <ligand>
        <name>Zn(2+)</name>
        <dbReference type="ChEBI" id="CHEBI:29105"/>
    </ligand>
</feature>
<feature type="binding site" evidence="1">
    <location>
        <position position="32"/>
    </location>
    <ligand>
        <name>Zn(2+)</name>
        <dbReference type="ChEBI" id="CHEBI:29105"/>
    </ligand>
</feature>
<feature type="binding site" evidence="1">
    <location>
        <position position="48"/>
    </location>
    <ligand>
        <name>Zn(2+)</name>
        <dbReference type="ChEBI" id="CHEBI:29105"/>
    </ligand>
</feature>
<feature type="binding site" evidence="1">
    <location>
        <position position="51"/>
    </location>
    <ligand>
        <name>Zn(2+)</name>
        <dbReference type="ChEBI" id="CHEBI:29105"/>
    </ligand>
</feature>
<reference key="1">
    <citation type="submission" date="2007-09" db="EMBL/GenBank/DDBJ databases">
        <title>Complete sequence of chromosome of Serratia proteamaculans 568.</title>
        <authorList>
            <consortium name="US DOE Joint Genome Institute"/>
            <person name="Copeland A."/>
            <person name="Lucas S."/>
            <person name="Lapidus A."/>
            <person name="Barry K."/>
            <person name="Glavina del Rio T."/>
            <person name="Dalin E."/>
            <person name="Tice H."/>
            <person name="Pitluck S."/>
            <person name="Chain P."/>
            <person name="Malfatti S."/>
            <person name="Shin M."/>
            <person name="Vergez L."/>
            <person name="Schmutz J."/>
            <person name="Larimer F."/>
            <person name="Land M."/>
            <person name="Hauser L."/>
            <person name="Kyrpides N."/>
            <person name="Kim E."/>
            <person name="Taghavi S."/>
            <person name="Newman L."/>
            <person name="Vangronsveld J."/>
            <person name="van der Lelie D."/>
            <person name="Richardson P."/>
        </authorList>
    </citation>
    <scope>NUCLEOTIDE SEQUENCE [LARGE SCALE GENOMIC DNA]</scope>
    <source>
        <strain>568</strain>
    </source>
</reference>
<evidence type="ECO:0000255" key="1">
    <source>
        <dbReference type="HAMAP-Rule" id="MF_01395"/>
    </source>
</evidence>
<evidence type="ECO:0000255" key="2">
    <source>
        <dbReference type="PROSITE-ProRule" id="PRU01136"/>
    </source>
</evidence>
<evidence type="ECO:0000256" key="3">
    <source>
        <dbReference type="SAM" id="MobiDB-lite"/>
    </source>
</evidence>
<keyword id="KW-0067">ATP-binding</keyword>
<keyword id="KW-0963">Cytoplasm</keyword>
<keyword id="KW-0275">Fatty acid biosynthesis</keyword>
<keyword id="KW-0276">Fatty acid metabolism</keyword>
<keyword id="KW-0444">Lipid biosynthesis</keyword>
<keyword id="KW-0443">Lipid metabolism</keyword>
<keyword id="KW-0479">Metal-binding</keyword>
<keyword id="KW-0547">Nucleotide-binding</keyword>
<keyword id="KW-0808">Transferase</keyword>
<keyword id="KW-0862">Zinc</keyword>
<keyword id="KW-0863">Zinc-finger</keyword>
<proteinExistence type="inferred from homology"/>
<gene>
    <name evidence="1" type="primary">accD</name>
    <name type="ordered locus">Spro_3332</name>
</gene>
<name>ACCD_SERP5</name>
<comment type="function">
    <text evidence="1">Component of the acetyl coenzyme A carboxylase (ACC) complex. Biotin carboxylase (BC) catalyzes the carboxylation of biotin on its carrier protein (BCCP) and then the CO(2) group is transferred by the transcarboxylase to acetyl-CoA to form malonyl-CoA.</text>
</comment>
<comment type="catalytic activity">
    <reaction evidence="1">
        <text>N(6)-carboxybiotinyl-L-lysyl-[protein] + acetyl-CoA = N(6)-biotinyl-L-lysyl-[protein] + malonyl-CoA</text>
        <dbReference type="Rhea" id="RHEA:54728"/>
        <dbReference type="Rhea" id="RHEA-COMP:10505"/>
        <dbReference type="Rhea" id="RHEA-COMP:10506"/>
        <dbReference type="ChEBI" id="CHEBI:57288"/>
        <dbReference type="ChEBI" id="CHEBI:57384"/>
        <dbReference type="ChEBI" id="CHEBI:83144"/>
        <dbReference type="ChEBI" id="CHEBI:83145"/>
        <dbReference type="EC" id="2.1.3.15"/>
    </reaction>
</comment>
<comment type="cofactor">
    <cofactor evidence="1">
        <name>Zn(2+)</name>
        <dbReference type="ChEBI" id="CHEBI:29105"/>
    </cofactor>
    <text evidence="1">Binds 1 zinc ion per subunit.</text>
</comment>
<comment type="pathway">
    <text evidence="1">Lipid metabolism; malonyl-CoA biosynthesis; malonyl-CoA from acetyl-CoA: step 1/1.</text>
</comment>
<comment type="subunit">
    <text evidence="1">Acetyl-CoA carboxylase is a heterohexamer composed of biotin carboxyl carrier protein (AccB), biotin carboxylase (AccC) and two subunits each of ACCase subunit alpha (AccA) and ACCase subunit beta (AccD).</text>
</comment>
<comment type="subcellular location">
    <subcellularLocation>
        <location evidence="1">Cytoplasm</location>
    </subcellularLocation>
</comment>
<comment type="similarity">
    <text evidence="1">Belongs to the AccD/PCCB family.</text>
</comment>
<accession>A8GH40</accession>
<sequence>MSWIERILNKSNITQTRKASIPEGVWTKCDSCGQVLYRAELERNLEVCPKCDHHMRMTARMRLHTLLDEGSEVELGSELEPKDVLKFKDSKKYKDRLVAAQKATGEKDALVVMKGTLYGMPIVAASFEFAFIGGSMSSVVGARFVRAVEQALEDNCPLVCFSASGGARMQEALMSLMQMAKTSAALAKLQERGLPYISVLTDPTMGGVSASLAMLGDINIAEPKALIGFAGPRVIEQTVREKLPPGFQRSEFLIEKGAIDMIVRRPEMRQTLASILSKLTNQPQPHFDEAAPVSEQENQADA</sequence>
<organism>
    <name type="scientific">Serratia proteamaculans (strain 568)</name>
    <dbReference type="NCBI Taxonomy" id="399741"/>
    <lineage>
        <taxon>Bacteria</taxon>
        <taxon>Pseudomonadati</taxon>
        <taxon>Pseudomonadota</taxon>
        <taxon>Gammaproteobacteria</taxon>
        <taxon>Enterobacterales</taxon>
        <taxon>Yersiniaceae</taxon>
        <taxon>Serratia</taxon>
    </lineage>
</organism>
<dbReference type="EC" id="2.1.3.15" evidence="1"/>
<dbReference type="EMBL" id="CP000826">
    <property type="protein sequence ID" value="ABV42430.1"/>
    <property type="molecule type" value="Genomic_DNA"/>
</dbReference>
<dbReference type="SMR" id="A8GH40"/>
<dbReference type="STRING" id="399741.Spro_3332"/>
<dbReference type="KEGG" id="spe:Spro_3332"/>
<dbReference type="eggNOG" id="COG0777">
    <property type="taxonomic scope" value="Bacteria"/>
</dbReference>
<dbReference type="HOGENOM" id="CLU_015486_1_0_6"/>
<dbReference type="OrthoDB" id="9772975at2"/>
<dbReference type="UniPathway" id="UPA00655">
    <property type="reaction ID" value="UER00711"/>
</dbReference>
<dbReference type="GO" id="GO:0009329">
    <property type="term" value="C:acetate CoA-transferase complex"/>
    <property type="evidence" value="ECO:0007669"/>
    <property type="project" value="TreeGrafter"/>
</dbReference>
<dbReference type="GO" id="GO:0003989">
    <property type="term" value="F:acetyl-CoA carboxylase activity"/>
    <property type="evidence" value="ECO:0007669"/>
    <property type="project" value="InterPro"/>
</dbReference>
<dbReference type="GO" id="GO:0005524">
    <property type="term" value="F:ATP binding"/>
    <property type="evidence" value="ECO:0007669"/>
    <property type="project" value="UniProtKB-KW"/>
</dbReference>
<dbReference type="GO" id="GO:0016743">
    <property type="term" value="F:carboxyl- or carbamoyltransferase activity"/>
    <property type="evidence" value="ECO:0007669"/>
    <property type="project" value="UniProtKB-UniRule"/>
</dbReference>
<dbReference type="GO" id="GO:0008270">
    <property type="term" value="F:zinc ion binding"/>
    <property type="evidence" value="ECO:0007669"/>
    <property type="project" value="UniProtKB-UniRule"/>
</dbReference>
<dbReference type="GO" id="GO:0006633">
    <property type="term" value="P:fatty acid biosynthetic process"/>
    <property type="evidence" value="ECO:0007669"/>
    <property type="project" value="UniProtKB-KW"/>
</dbReference>
<dbReference type="GO" id="GO:2001295">
    <property type="term" value="P:malonyl-CoA biosynthetic process"/>
    <property type="evidence" value="ECO:0007669"/>
    <property type="project" value="UniProtKB-UniRule"/>
</dbReference>
<dbReference type="FunFam" id="3.90.226.10:FF:000013">
    <property type="entry name" value="Acetyl-coenzyme A carboxylase carboxyl transferase subunit beta"/>
    <property type="match status" value="1"/>
</dbReference>
<dbReference type="Gene3D" id="3.90.226.10">
    <property type="entry name" value="2-enoyl-CoA Hydratase, Chain A, domain 1"/>
    <property type="match status" value="1"/>
</dbReference>
<dbReference type="HAMAP" id="MF_01395">
    <property type="entry name" value="AcetylCoA_CT_beta"/>
    <property type="match status" value="1"/>
</dbReference>
<dbReference type="InterPro" id="IPR034733">
    <property type="entry name" value="AcCoA_carboxyl_beta"/>
</dbReference>
<dbReference type="InterPro" id="IPR000438">
    <property type="entry name" value="Acetyl_CoA_COase_Trfase_b_su"/>
</dbReference>
<dbReference type="InterPro" id="IPR029045">
    <property type="entry name" value="ClpP/crotonase-like_dom_sf"/>
</dbReference>
<dbReference type="InterPro" id="IPR011762">
    <property type="entry name" value="COA_CT_N"/>
</dbReference>
<dbReference type="InterPro" id="IPR041010">
    <property type="entry name" value="Znf-ACC"/>
</dbReference>
<dbReference type="NCBIfam" id="TIGR00515">
    <property type="entry name" value="accD"/>
    <property type="match status" value="1"/>
</dbReference>
<dbReference type="PANTHER" id="PTHR42995">
    <property type="entry name" value="ACETYL-COENZYME A CARBOXYLASE CARBOXYL TRANSFERASE SUBUNIT BETA, CHLOROPLASTIC"/>
    <property type="match status" value="1"/>
</dbReference>
<dbReference type="PANTHER" id="PTHR42995:SF5">
    <property type="entry name" value="ACETYL-COENZYME A CARBOXYLASE CARBOXYL TRANSFERASE SUBUNIT BETA, CHLOROPLASTIC"/>
    <property type="match status" value="1"/>
</dbReference>
<dbReference type="Pfam" id="PF01039">
    <property type="entry name" value="Carboxyl_trans"/>
    <property type="match status" value="1"/>
</dbReference>
<dbReference type="Pfam" id="PF17848">
    <property type="entry name" value="Zn_ribbon_ACC"/>
    <property type="match status" value="1"/>
</dbReference>
<dbReference type="PRINTS" id="PR01070">
    <property type="entry name" value="ACCCTRFRASEB"/>
</dbReference>
<dbReference type="SUPFAM" id="SSF52096">
    <property type="entry name" value="ClpP/crotonase"/>
    <property type="match status" value="1"/>
</dbReference>
<dbReference type="PROSITE" id="PS50980">
    <property type="entry name" value="COA_CT_NTER"/>
    <property type="match status" value="1"/>
</dbReference>